<accession>Q5SBP1</accession>
<organism>
    <name type="scientific">Ocimum basilicum</name>
    <name type="common">Sweet basil</name>
    <dbReference type="NCBI Taxonomy" id="39350"/>
    <lineage>
        <taxon>Eukaryota</taxon>
        <taxon>Viridiplantae</taxon>
        <taxon>Streptophyta</taxon>
        <taxon>Embryophyta</taxon>
        <taxon>Tracheophyta</taxon>
        <taxon>Spermatophyta</taxon>
        <taxon>Magnoliopsida</taxon>
        <taxon>eudicotyledons</taxon>
        <taxon>Gunneridae</taxon>
        <taxon>Pentapetalae</taxon>
        <taxon>asterids</taxon>
        <taxon>lamiids</taxon>
        <taxon>Lamiales</taxon>
        <taxon>Lamiaceae</taxon>
        <taxon>Nepetoideae</taxon>
        <taxon>Ocimeae</taxon>
        <taxon>Ociminae</taxon>
        <taxon>Ocimum</taxon>
    </lineage>
</organism>
<gene>
    <name type="primary">MYS</name>
</gene>
<name>MYRS_OCIBA</name>
<evidence type="ECO:0000250" key="1"/>
<evidence type="ECO:0000255" key="2"/>
<evidence type="ECO:0000269" key="3">
    <source>
    </source>
</evidence>
<evidence type="ECO:0000305" key="4"/>
<dbReference type="EC" id="4.2.3.15"/>
<dbReference type="EMBL" id="AY693649">
    <property type="protein sequence ID" value="AAV63791.1"/>
    <property type="molecule type" value="mRNA"/>
</dbReference>
<dbReference type="SMR" id="Q5SBP1"/>
<dbReference type="UniPathway" id="UPA00213"/>
<dbReference type="GO" id="GO:0009507">
    <property type="term" value="C:chloroplast"/>
    <property type="evidence" value="ECO:0007669"/>
    <property type="project" value="UniProtKB-SubCell"/>
</dbReference>
<dbReference type="GO" id="GO:0000287">
    <property type="term" value="F:magnesium ion binding"/>
    <property type="evidence" value="ECO:0007669"/>
    <property type="project" value="InterPro"/>
</dbReference>
<dbReference type="GO" id="GO:0050551">
    <property type="term" value="F:myrcene synthase activity"/>
    <property type="evidence" value="ECO:0007669"/>
    <property type="project" value="UniProtKB-EC"/>
</dbReference>
<dbReference type="GO" id="GO:0050550">
    <property type="term" value="F:pinene synthase activity"/>
    <property type="evidence" value="ECO:0007669"/>
    <property type="project" value="UniProtKB-ARBA"/>
</dbReference>
<dbReference type="GO" id="GO:0046248">
    <property type="term" value="P:alpha-pinene biosynthetic process"/>
    <property type="evidence" value="ECO:0007669"/>
    <property type="project" value="UniProtKB-ARBA"/>
</dbReference>
<dbReference type="GO" id="GO:0016102">
    <property type="term" value="P:diterpenoid biosynthetic process"/>
    <property type="evidence" value="ECO:0007669"/>
    <property type="project" value="InterPro"/>
</dbReference>
<dbReference type="GO" id="GO:0010597">
    <property type="term" value="P:green leaf volatile biosynthetic process"/>
    <property type="evidence" value="ECO:0007669"/>
    <property type="project" value="UniProtKB-ARBA"/>
</dbReference>
<dbReference type="GO" id="GO:0016099">
    <property type="term" value="P:monoterpenoid biosynthetic process"/>
    <property type="evidence" value="ECO:0007669"/>
    <property type="project" value="UniProtKB-ARBA"/>
</dbReference>
<dbReference type="CDD" id="cd00684">
    <property type="entry name" value="Terpene_cyclase_plant_C1"/>
    <property type="match status" value="1"/>
</dbReference>
<dbReference type="FunFam" id="1.10.600.10:FF:000007">
    <property type="entry name" value="Isoprene synthase, chloroplastic"/>
    <property type="match status" value="1"/>
</dbReference>
<dbReference type="FunFam" id="1.50.10.130:FF:000001">
    <property type="entry name" value="Isoprene synthase, chloroplastic"/>
    <property type="match status" value="1"/>
</dbReference>
<dbReference type="Gene3D" id="1.10.600.10">
    <property type="entry name" value="Farnesyl Diphosphate Synthase"/>
    <property type="match status" value="1"/>
</dbReference>
<dbReference type="Gene3D" id="1.50.10.130">
    <property type="entry name" value="Terpene synthase, N-terminal domain"/>
    <property type="match status" value="1"/>
</dbReference>
<dbReference type="InterPro" id="IPR008949">
    <property type="entry name" value="Isoprenoid_synthase_dom_sf"/>
</dbReference>
<dbReference type="InterPro" id="IPR034741">
    <property type="entry name" value="Terpene_cyclase-like_1_C"/>
</dbReference>
<dbReference type="InterPro" id="IPR044814">
    <property type="entry name" value="Terpene_cyclase_plant_C1"/>
</dbReference>
<dbReference type="InterPro" id="IPR001906">
    <property type="entry name" value="Terpene_synth_N"/>
</dbReference>
<dbReference type="InterPro" id="IPR036965">
    <property type="entry name" value="Terpene_synth_N_sf"/>
</dbReference>
<dbReference type="InterPro" id="IPR050148">
    <property type="entry name" value="Terpene_synthase-like"/>
</dbReference>
<dbReference type="InterPro" id="IPR005630">
    <property type="entry name" value="Terpene_synthase_metal-bd"/>
</dbReference>
<dbReference type="InterPro" id="IPR008930">
    <property type="entry name" value="Terpenoid_cyclase/PrenylTrfase"/>
</dbReference>
<dbReference type="PANTHER" id="PTHR31225">
    <property type="entry name" value="OS04G0344100 PROTEIN-RELATED"/>
    <property type="match status" value="1"/>
</dbReference>
<dbReference type="PANTHER" id="PTHR31225:SF9">
    <property type="entry name" value="TERPENE SYNTHASE 10"/>
    <property type="match status" value="1"/>
</dbReference>
<dbReference type="Pfam" id="PF01397">
    <property type="entry name" value="Terpene_synth"/>
    <property type="match status" value="1"/>
</dbReference>
<dbReference type="Pfam" id="PF03936">
    <property type="entry name" value="Terpene_synth_C"/>
    <property type="match status" value="1"/>
</dbReference>
<dbReference type="SFLD" id="SFLDG01019">
    <property type="entry name" value="Terpene_Cyclase_Like_1_C_Termi"/>
    <property type="match status" value="1"/>
</dbReference>
<dbReference type="SFLD" id="SFLDG01604">
    <property type="entry name" value="Terpene_Cyclase_Like_1_C_Termi"/>
    <property type="match status" value="1"/>
</dbReference>
<dbReference type="SUPFAM" id="SSF48239">
    <property type="entry name" value="Terpenoid cyclases/Protein prenyltransferases"/>
    <property type="match status" value="1"/>
</dbReference>
<dbReference type="SUPFAM" id="SSF48576">
    <property type="entry name" value="Terpenoid synthases"/>
    <property type="match status" value="1"/>
</dbReference>
<comment type="function">
    <text evidence="3">Monoterpene synthase that catalyzes the formation of beta-myrcene from geranyl diphosphate.</text>
</comment>
<comment type="catalytic activity">
    <reaction evidence="3">
        <text>(2E)-geranyl diphosphate = beta-myrcene + diphosphate</text>
        <dbReference type="Rhea" id="RHEA:16965"/>
        <dbReference type="ChEBI" id="CHEBI:17221"/>
        <dbReference type="ChEBI" id="CHEBI:33019"/>
        <dbReference type="ChEBI" id="CHEBI:58057"/>
        <dbReference type="EC" id="4.2.3.15"/>
    </reaction>
</comment>
<comment type="cofactor">
    <cofactor evidence="1">
        <name>Mg(2+)</name>
        <dbReference type="ChEBI" id="CHEBI:18420"/>
    </cofactor>
    <cofactor evidence="1">
        <name>Mn(2+)</name>
        <dbReference type="ChEBI" id="CHEBI:29035"/>
    </cofactor>
    <text evidence="1">Binds 3 Mg(2+) or Mn(2+) ions per subunit.</text>
</comment>
<comment type="pathway">
    <text>Secondary metabolite biosynthesis; terpenoid biosynthesis.</text>
</comment>
<comment type="subcellular location">
    <subcellularLocation>
        <location evidence="4">Plastid</location>
        <location evidence="4">Chloroplast</location>
    </subcellularLocation>
</comment>
<comment type="domain">
    <text>The Asp-Asp-Xaa-Xaa-Asp/Glu (DDXXD/E) motif is important for the catalytic activity, presumably through binding to Mg(2+).</text>
</comment>
<comment type="similarity">
    <text evidence="4">Belongs to the terpene synthase family.</text>
</comment>
<keyword id="KW-0150">Chloroplast</keyword>
<keyword id="KW-0456">Lyase</keyword>
<keyword id="KW-0460">Magnesium</keyword>
<keyword id="KW-0479">Metal-binding</keyword>
<keyword id="KW-0934">Plastid</keyword>
<keyword id="KW-0809">Transit peptide</keyword>
<reference key="1">
    <citation type="journal article" date="2004" name="Plant Physiol.">
        <title>The biochemical and molecular basis for the divergent patterns in the biosynthesis of terpenes and phenylpropenes in the peltate glands of three cultivars of basil.</title>
        <authorList>
            <person name="Iijima Y."/>
            <person name="Davidovich-Rikanati R."/>
            <person name="Fridman E."/>
            <person name="Gang D.R."/>
            <person name="Bar E."/>
            <person name="Lewinsohn E."/>
            <person name="Pichersky E."/>
        </authorList>
    </citation>
    <scope>NUCLEOTIDE SEQUENCE [MRNA]</scope>
    <scope>FUNCTION</scope>
    <scope>CATALYTIC ACTIVITY</scope>
</reference>
<proteinExistence type="evidence at protein level"/>
<protein>
    <recommendedName>
        <fullName>Beta-myrcene synthase, chloroplastic</fullName>
        <ecNumber>4.2.3.15</ecNumber>
    </recommendedName>
</protein>
<feature type="transit peptide" description="Chloroplast" evidence="2">
    <location>
        <begin position="1"/>
        <end position="34"/>
    </location>
</feature>
<feature type="chain" id="PRO_0000399254" description="Beta-myrcene synthase, chloroplastic">
    <location>
        <begin position="35"/>
        <end position="599"/>
    </location>
</feature>
<feature type="short sequence motif" description="DDXXD motif">
    <location>
        <begin position="352"/>
        <end position="356"/>
    </location>
</feature>
<feature type="binding site" evidence="1">
    <location>
        <position position="352"/>
    </location>
    <ligand>
        <name>Mg(2+)</name>
        <dbReference type="ChEBI" id="CHEBI:18420"/>
        <label>1</label>
    </ligand>
</feature>
<feature type="binding site" evidence="1">
    <location>
        <position position="352"/>
    </location>
    <ligand>
        <name>Mg(2+)</name>
        <dbReference type="ChEBI" id="CHEBI:18420"/>
        <label>2</label>
    </ligand>
</feature>
<feature type="binding site" evidence="1">
    <location>
        <position position="356"/>
    </location>
    <ligand>
        <name>Mg(2+)</name>
        <dbReference type="ChEBI" id="CHEBI:18420"/>
        <label>1</label>
    </ligand>
</feature>
<feature type="binding site" evidence="1">
    <location>
        <position position="356"/>
    </location>
    <ligand>
        <name>Mg(2+)</name>
        <dbReference type="ChEBI" id="CHEBI:18420"/>
        <label>2</label>
    </ligand>
</feature>
<feature type="binding site" evidence="1">
    <location>
        <position position="496"/>
    </location>
    <ligand>
        <name>Mg(2+)</name>
        <dbReference type="ChEBI" id="CHEBI:18420"/>
        <label>3</label>
    </ligand>
</feature>
<feature type="binding site" evidence="1">
    <location>
        <position position="500"/>
    </location>
    <ligand>
        <name>Mg(2+)</name>
        <dbReference type="ChEBI" id="CHEBI:18420"/>
        <label>3</label>
    </ligand>
</feature>
<feature type="binding site" evidence="1">
    <location>
        <position position="504"/>
    </location>
    <ligand>
        <name>Mg(2+)</name>
        <dbReference type="ChEBI" id="CHEBI:18420"/>
        <label>3</label>
    </ligand>
</feature>
<sequence>MWSTISISMNVAILKKPLNFLHNSNNKASNPRCVSSTRRRPSCPLQLDVEPRRSGNYQPSAWDFNYIQSLNNNHSKEERHLERKAKLIEEVKMLLEQEMAAVQQLELIEDLKNLGLSYLFQDEIKIILNSIYNHHKCFHNNHEQCIHVNSDLYFVALGFRLFRQHGFKVSQEVFDCFKNEEGSDFSANLADDTKGLLQLYEASYLVTEDEDTLEMARQFSTKILQKKVEEKMIEKENLLSWTLHSLELPLHWRIQRLEAKWFLDAYASRPDMNPIIFELAKLEFNIAQALQQEELKDLSRWWNDTGIAEKLPFARDRIVESHYWAIGTLEPYQYRYQRSLIAKIIALTTVVDDVYDVYGTLDELQLFTDAIRRWDIESINQLPSYMQLCYLAIYNFVSELAYDIFRDKGFNSLPYLHKSWLDLVEAYFVEAKWFHDGYTPTLEEYLNNSKITIICPAIVSEIYFAFANSIDKTEVESIYKYHDILYLSGMLARLPDDLGTSSFEMKRGDVAKAIQCYMKEHNASEEEAREHIRFLMREAWKHMNTAAAADDCPFESDLVVGAASLGRVANFVYVEGDGFGVQHSKIHQQMAELLFYPYQ</sequence>